<evidence type="ECO:0000255" key="1">
    <source>
        <dbReference type="HAMAP-Rule" id="MF_01321"/>
    </source>
</evidence>
<proteinExistence type="inferred from homology"/>
<accession>A0K3L7</accession>
<comment type="function">
    <text evidence="1">DNA-dependent RNA polymerase catalyzes the transcription of DNA into RNA using the four ribonucleoside triphosphates as substrates.</text>
</comment>
<comment type="catalytic activity">
    <reaction evidence="1">
        <text>RNA(n) + a ribonucleoside 5'-triphosphate = RNA(n+1) + diphosphate</text>
        <dbReference type="Rhea" id="RHEA:21248"/>
        <dbReference type="Rhea" id="RHEA-COMP:14527"/>
        <dbReference type="Rhea" id="RHEA-COMP:17342"/>
        <dbReference type="ChEBI" id="CHEBI:33019"/>
        <dbReference type="ChEBI" id="CHEBI:61557"/>
        <dbReference type="ChEBI" id="CHEBI:140395"/>
        <dbReference type="EC" id="2.7.7.6"/>
    </reaction>
</comment>
<comment type="subunit">
    <text evidence="1">The RNAP catalytic core consists of 2 alpha, 1 beta, 1 beta' and 1 omega subunit. When a sigma factor is associated with the core the holoenzyme is formed, which can initiate transcription.</text>
</comment>
<comment type="similarity">
    <text evidence="1">Belongs to the RNA polymerase beta chain family.</text>
</comment>
<organism>
    <name type="scientific">Burkholderia cenocepacia (strain HI2424)</name>
    <dbReference type="NCBI Taxonomy" id="331272"/>
    <lineage>
        <taxon>Bacteria</taxon>
        <taxon>Pseudomonadati</taxon>
        <taxon>Pseudomonadota</taxon>
        <taxon>Betaproteobacteria</taxon>
        <taxon>Burkholderiales</taxon>
        <taxon>Burkholderiaceae</taxon>
        <taxon>Burkholderia</taxon>
        <taxon>Burkholderia cepacia complex</taxon>
    </lineage>
</organism>
<protein>
    <recommendedName>
        <fullName evidence="1">DNA-directed RNA polymerase subunit beta</fullName>
        <shortName evidence="1">RNAP subunit beta</shortName>
        <ecNumber evidence="1">2.7.7.6</ecNumber>
    </recommendedName>
    <alternativeName>
        <fullName evidence="1">RNA polymerase subunit beta</fullName>
    </alternativeName>
    <alternativeName>
        <fullName evidence="1">Transcriptase subunit beta</fullName>
    </alternativeName>
</protein>
<gene>
    <name evidence="1" type="primary">rpoB</name>
    <name type="ordered locus">Bcen2424_0340</name>
</gene>
<name>RPOB_BURCH</name>
<reference key="1">
    <citation type="submission" date="2006-08" db="EMBL/GenBank/DDBJ databases">
        <title>Complete sequence of chromosome 1 of Burkholderia cenocepacia HI2424.</title>
        <authorList>
            <person name="Copeland A."/>
            <person name="Lucas S."/>
            <person name="Lapidus A."/>
            <person name="Barry K."/>
            <person name="Detter J.C."/>
            <person name="Glavina del Rio T."/>
            <person name="Hammon N."/>
            <person name="Israni S."/>
            <person name="Pitluck S."/>
            <person name="Chain P."/>
            <person name="Malfatti S."/>
            <person name="Shin M."/>
            <person name="Vergez L."/>
            <person name="Schmutz J."/>
            <person name="Larimer F."/>
            <person name="Land M."/>
            <person name="Hauser L."/>
            <person name="Kyrpides N."/>
            <person name="Kim E."/>
            <person name="LiPuma J.J."/>
            <person name="Gonzalez C.F."/>
            <person name="Konstantinidis K."/>
            <person name="Tiedje J.M."/>
            <person name="Richardson P."/>
        </authorList>
    </citation>
    <scope>NUCLEOTIDE SEQUENCE [LARGE SCALE GENOMIC DNA]</scope>
    <source>
        <strain>HI2424</strain>
    </source>
</reference>
<sequence>MQYSFTEKKRIRKSFAKRPIVHQVPFLLATQLESFSTFLQADVPATQRKPEGLQAAFTSVFPIVSHNGFARLEFVSYALSSPAFNIKECQQRGLTYCSALRAKVRLVILDKESPNKPVVKEVKEQEVYMGEIPLMTPTGSFVINGTERVIVSQLHRSPGVFFEHDKGKTHSSGKLLFSARIIPYRGSWLDFEFDPKDILYFRVDRRRKMPVTILLKAIGLTPEQILANFFVFDNFTLMDEGAQLEFVPERLRGEVARFDITDRDGKVIVQKDKRINAKHIRDLEAAKTKFISVPEDYLLGRVLAKNVVDGDTGEVIASANDEVTESVLEKLREAGIKDIQTLYTNDLDQGPYISSTLRVDETTDKTAARIAIYRMMRPGEPPTEEAVEALFNRLFYSEEAYDLSKVGRMKFNRRVGRDEIVGPMTLQDDDILATIKILVELRNGKGEVDDIDHLGNRRVRCVGELAENQFRAGLVRVERAVKERLGQAESENLMPHDLINSKPISSAIREFFGSSQLSQFMDQTNPLSEITHKRRVSALGPGGLTRERAGFEVRDVHPTHYGRVCPIETPEGPNIGLINSLALYAHLNEYGFLETPYRKVVDSKVTDQIDYLSAIEEGRYMIAQANAAIDENGQLIDELVSSREAGETMMVTPDRIQYMDVAPSQIVSVAASLIPFLEHDDANRALMGSNMQRQAVPCLRPEKPVVGTGIERTCAVDSGTTVQAFRGGVVDYVDAGRIVIRVNDDEAVAGEVGVDIYNLIKYTRSNQNTNINQRPIVKMGDKVSRGDVLADGASTDLGELALGQNMLIAFMPWNGYNFEDSILISEKVVADDRYTSIHIEELNVVARDTKLGPEEITRDISNLAEVQLGRLDESGIVYIGAEVEAGDVLVGKVTPKGETQLTPEEKLLRAIFGEKASDVKDTSLRVPSGMSGTVIDVQVFTREGIQRDKRAQQIIDDELKRYRLDLNDQLRIVEGDAFQRLARMLVGKVANGGPKKLAKGTKIDQAYLEDLDHYHWFDIRLADDEAAAQLEAIKNSIEEKRHQFDLAFEEKRKKLTQGDELPPGVLKMVKVYLAVKRRLQPGDKMAGRHGNKGVVSKIVPIEDMPYMADGRPADVVLNPLGVPSRMNVGQVLEVHLGWAAKGLGWRIGEMLQRQAKIEELRTFLTKIYNESGRQEDLESFTDDEILELAKNLREGVPFATPVFDGATEEEMGKMLDLAFPDDIAEQLGMNPSKNQVRLYDGRTGEMFERRVTLGYMHYLKLHHLVDDKMHARSTGPYSLVTQQPLGGKAQFGGQRFGEMEVWALEAYGASYVLQEMLTVKSDDVTGRTKVYENLVKGDHVIDAGMPESFNVLVKEIRSLGIDIDLDRN</sequence>
<dbReference type="EC" id="2.7.7.6" evidence="1"/>
<dbReference type="EMBL" id="CP000458">
    <property type="protein sequence ID" value="ABK07094.1"/>
    <property type="molecule type" value="Genomic_DNA"/>
</dbReference>
<dbReference type="RefSeq" id="WP_011546646.1">
    <property type="nucleotide sequence ID" value="NC_008542.1"/>
</dbReference>
<dbReference type="SMR" id="A0K3L7"/>
<dbReference type="GeneID" id="83047123"/>
<dbReference type="KEGG" id="bch:Bcen2424_0340"/>
<dbReference type="HOGENOM" id="CLU_000524_4_3_4"/>
<dbReference type="GO" id="GO:0000428">
    <property type="term" value="C:DNA-directed RNA polymerase complex"/>
    <property type="evidence" value="ECO:0007669"/>
    <property type="project" value="UniProtKB-KW"/>
</dbReference>
<dbReference type="GO" id="GO:0003677">
    <property type="term" value="F:DNA binding"/>
    <property type="evidence" value="ECO:0007669"/>
    <property type="project" value="UniProtKB-UniRule"/>
</dbReference>
<dbReference type="GO" id="GO:0003899">
    <property type="term" value="F:DNA-directed RNA polymerase activity"/>
    <property type="evidence" value="ECO:0007669"/>
    <property type="project" value="UniProtKB-UniRule"/>
</dbReference>
<dbReference type="GO" id="GO:0032549">
    <property type="term" value="F:ribonucleoside binding"/>
    <property type="evidence" value="ECO:0007669"/>
    <property type="project" value="InterPro"/>
</dbReference>
<dbReference type="GO" id="GO:0006351">
    <property type="term" value="P:DNA-templated transcription"/>
    <property type="evidence" value="ECO:0007669"/>
    <property type="project" value="UniProtKB-UniRule"/>
</dbReference>
<dbReference type="CDD" id="cd00653">
    <property type="entry name" value="RNA_pol_B_RPB2"/>
    <property type="match status" value="1"/>
</dbReference>
<dbReference type="FunFam" id="2.40.50.100:FF:000006">
    <property type="entry name" value="DNA-directed RNA polymerase subunit beta"/>
    <property type="match status" value="1"/>
</dbReference>
<dbReference type="FunFam" id="2.40.50.150:FF:000001">
    <property type="entry name" value="DNA-directed RNA polymerase subunit beta"/>
    <property type="match status" value="1"/>
</dbReference>
<dbReference type="FunFam" id="3.90.1800.10:FF:000001">
    <property type="entry name" value="DNA-directed RNA polymerase subunit beta"/>
    <property type="match status" value="1"/>
</dbReference>
<dbReference type="Gene3D" id="2.40.50.100">
    <property type="match status" value="1"/>
</dbReference>
<dbReference type="Gene3D" id="2.40.50.150">
    <property type="match status" value="1"/>
</dbReference>
<dbReference type="Gene3D" id="3.90.1100.10">
    <property type="match status" value="2"/>
</dbReference>
<dbReference type="Gene3D" id="2.30.150.10">
    <property type="entry name" value="DNA-directed RNA polymerase, beta subunit, external 1 domain"/>
    <property type="match status" value="1"/>
</dbReference>
<dbReference type="Gene3D" id="2.40.270.10">
    <property type="entry name" value="DNA-directed RNA polymerase, subunit 2, domain 6"/>
    <property type="match status" value="2"/>
</dbReference>
<dbReference type="Gene3D" id="3.90.1800.10">
    <property type="entry name" value="RNA polymerase alpha subunit dimerisation domain"/>
    <property type="match status" value="1"/>
</dbReference>
<dbReference type="Gene3D" id="3.90.1110.10">
    <property type="entry name" value="RNA polymerase Rpb2, domain 2"/>
    <property type="match status" value="2"/>
</dbReference>
<dbReference type="HAMAP" id="MF_01321">
    <property type="entry name" value="RNApol_bact_RpoB"/>
    <property type="match status" value="1"/>
</dbReference>
<dbReference type="InterPro" id="IPR042107">
    <property type="entry name" value="DNA-dir_RNA_pol_bsu_ext_1_sf"/>
</dbReference>
<dbReference type="InterPro" id="IPR019462">
    <property type="entry name" value="DNA-dir_RNA_pol_bsu_external_1"/>
</dbReference>
<dbReference type="InterPro" id="IPR015712">
    <property type="entry name" value="DNA-dir_RNA_pol_su2"/>
</dbReference>
<dbReference type="InterPro" id="IPR007120">
    <property type="entry name" value="DNA-dir_RNAP_su2_dom"/>
</dbReference>
<dbReference type="InterPro" id="IPR037033">
    <property type="entry name" value="DNA-dir_RNAP_su2_hyb_sf"/>
</dbReference>
<dbReference type="InterPro" id="IPR010243">
    <property type="entry name" value="RNA_pol_bsu_bac"/>
</dbReference>
<dbReference type="InterPro" id="IPR007121">
    <property type="entry name" value="RNA_pol_bsu_CS"/>
</dbReference>
<dbReference type="InterPro" id="IPR007644">
    <property type="entry name" value="RNA_pol_bsu_protrusion"/>
</dbReference>
<dbReference type="InterPro" id="IPR007642">
    <property type="entry name" value="RNA_pol_Rpb2_2"/>
</dbReference>
<dbReference type="InterPro" id="IPR037034">
    <property type="entry name" value="RNA_pol_Rpb2_2_sf"/>
</dbReference>
<dbReference type="InterPro" id="IPR007645">
    <property type="entry name" value="RNA_pol_Rpb2_3"/>
</dbReference>
<dbReference type="InterPro" id="IPR007641">
    <property type="entry name" value="RNA_pol_Rpb2_7"/>
</dbReference>
<dbReference type="InterPro" id="IPR014724">
    <property type="entry name" value="RNA_pol_RPB2_OB-fold"/>
</dbReference>
<dbReference type="NCBIfam" id="NF001616">
    <property type="entry name" value="PRK00405.1"/>
    <property type="match status" value="1"/>
</dbReference>
<dbReference type="NCBIfam" id="TIGR02013">
    <property type="entry name" value="rpoB"/>
    <property type="match status" value="1"/>
</dbReference>
<dbReference type="PANTHER" id="PTHR20856">
    <property type="entry name" value="DNA-DIRECTED RNA POLYMERASE I SUBUNIT 2"/>
    <property type="match status" value="1"/>
</dbReference>
<dbReference type="Pfam" id="PF04563">
    <property type="entry name" value="RNA_pol_Rpb2_1"/>
    <property type="match status" value="1"/>
</dbReference>
<dbReference type="Pfam" id="PF04561">
    <property type="entry name" value="RNA_pol_Rpb2_2"/>
    <property type="match status" value="2"/>
</dbReference>
<dbReference type="Pfam" id="PF04565">
    <property type="entry name" value="RNA_pol_Rpb2_3"/>
    <property type="match status" value="1"/>
</dbReference>
<dbReference type="Pfam" id="PF10385">
    <property type="entry name" value="RNA_pol_Rpb2_45"/>
    <property type="match status" value="1"/>
</dbReference>
<dbReference type="Pfam" id="PF00562">
    <property type="entry name" value="RNA_pol_Rpb2_6"/>
    <property type="match status" value="1"/>
</dbReference>
<dbReference type="Pfam" id="PF04560">
    <property type="entry name" value="RNA_pol_Rpb2_7"/>
    <property type="match status" value="1"/>
</dbReference>
<dbReference type="SUPFAM" id="SSF64484">
    <property type="entry name" value="beta and beta-prime subunits of DNA dependent RNA-polymerase"/>
    <property type="match status" value="1"/>
</dbReference>
<dbReference type="PROSITE" id="PS01166">
    <property type="entry name" value="RNA_POL_BETA"/>
    <property type="match status" value="1"/>
</dbReference>
<feature type="chain" id="PRO_0000300290" description="DNA-directed RNA polymerase subunit beta">
    <location>
        <begin position="1"/>
        <end position="1368"/>
    </location>
</feature>
<keyword id="KW-0240">DNA-directed RNA polymerase</keyword>
<keyword id="KW-0548">Nucleotidyltransferase</keyword>
<keyword id="KW-0804">Transcription</keyword>
<keyword id="KW-0808">Transferase</keyword>